<feature type="chain" id="PRO_1000069623" description="Purine nucleoside phosphorylase DeoD-type">
    <location>
        <begin position="1"/>
        <end position="235"/>
    </location>
</feature>
<feature type="active site" description="Proton donor" evidence="2">
    <location>
        <position position="204"/>
    </location>
</feature>
<feature type="binding site" evidence="1">
    <location>
        <position position="4"/>
    </location>
    <ligand>
        <name>a purine D-ribonucleoside</name>
        <dbReference type="ChEBI" id="CHEBI:142355"/>
        <note>ligand shared between dimeric partners</note>
    </ligand>
</feature>
<feature type="binding site" description="in other chain" evidence="1">
    <location>
        <position position="20"/>
    </location>
    <ligand>
        <name>phosphate</name>
        <dbReference type="ChEBI" id="CHEBI:43474"/>
        <note>ligand shared between dimeric partners</note>
    </ligand>
</feature>
<feature type="binding site" description="in other chain" evidence="1">
    <location>
        <position position="24"/>
    </location>
    <ligand>
        <name>phosphate</name>
        <dbReference type="ChEBI" id="CHEBI:43474"/>
        <note>ligand shared between dimeric partners</note>
    </ligand>
</feature>
<feature type="binding site" evidence="1">
    <location>
        <position position="43"/>
    </location>
    <ligand>
        <name>phosphate</name>
        <dbReference type="ChEBI" id="CHEBI:43474"/>
        <note>ligand shared between dimeric partners</note>
    </ligand>
</feature>
<feature type="binding site" description="in other chain" evidence="1">
    <location>
        <begin position="87"/>
        <end position="90"/>
    </location>
    <ligand>
        <name>phosphate</name>
        <dbReference type="ChEBI" id="CHEBI:43474"/>
        <note>ligand shared between dimeric partners</note>
    </ligand>
</feature>
<feature type="binding site" description="in other chain" evidence="1">
    <location>
        <begin position="179"/>
        <end position="181"/>
    </location>
    <ligand>
        <name>a purine D-ribonucleoside</name>
        <dbReference type="ChEBI" id="CHEBI:142355"/>
        <note>ligand shared between dimeric partners</note>
    </ligand>
</feature>
<feature type="binding site" description="in other chain" evidence="1">
    <location>
        <begin position="203"/>
        <end position="204"/>
    </location>
    <ligand>
        <name>a purine D-ribonucleoside</name>
        <dbReference type="ChEBI" id="CHEBI:142355"/>
        <note>ligand shared between dimeric partners</note>
    </ligand>
</feature>
<feature type="site" description="Important for catalytic activity" evidence="2">
    <location>
        <position position="217"/>
    </location>
</feature>
<keyword id="KW-0328">Glycosyltransferase</keyword>
<keyword id="KW-0808">Transferase</keyword>
<sequence length="235" mass="25639">MSIHIGAKEGQIAETILLPGDPLRAKFIAETFLENPVCYNEVRGMLGYTGTYKGKRISVQGTGMGVPSISIYVNELIRDYGVKNLIRVGTAGGMQEDIKVRDLVLAMSSHTDSAINKVRFNGLDFAPTASFKLLKAAYDTAVEKGYSPKVGSVFTADSFYNDNPEAWKQWAKFGTLAVEMETAALYTLAAKYGVNALTILTISDHLITAEETTSEERQTTFTKMMEVALDAAITL</sequence>
<accession>Q0ST47</accession>
<organism>
    <name type="scientific">Clostridium perfringens (strain SM101 / Type A)</name>
    <dbReference type="NCBI Taxonomy" id="289380"/>
    <lineage>
        <taxon>Bacteria</taxon>
        <taxon>Bacillati</taxon>
        <taxon>Bacillota</taxon>
        <taxon>Clostridia</taxon>
        <taxon>Eubacteriales</taxon>
        <taxon>Clostridiaceae</taxon>
        <taxon>Clostridium</taxon>
    </lineage>
</organism>
<proteinExistence type="inferred from homology"/>
<name>DEOD_CLOPS</name>
<reference key="1">
    <citation type="journal article" date="2006" name="Genome Res.">
        <title>Skewed genomic variability in strains of the toxigenic bacterial pathogen, Clostridium perfringens.</title>
        <authorList>
            <person name="Myers G.S.A."/>
            <person name="Rasko D.A."/>
            <person name="Cheung J.K."/>
            <person name="Ravel J."/>
            <person name="Seshadri R."/>
            <person name="DeBoy R.T."/>
            <person name="Ren Q."/>
            <person name="Varga J."/>
            <person name="Awad M.M."/>
            <person name="Brinkac L.M."/>
            <person name="Daugherty S.C."/>
            <person name="Haft D.H."/>
            <person name="Dodson R.J."/>
            <person name="Madupu R."/>
            <person name="Nelson W.C."/>
            <person name="Rosovitz M.J."/>
            <person name="Sullivan S.A."/>
            <person name="Khouri H."/>
            <person name="Dimitrov G.I."/>
            <person name="Watkins K.L."/>
            <person name="Mulligan S."/>
            <person name="Benton J."/>
            <person name="Radune D."/>
            <person name="Fisher D.J."/>
            <person name="Atkins H.S."/>
            <person name="Hiscox T."/>
            <person name="Jost B.H."/>
            <person name="Billington S.J."/>
            <person name="Songer J.G."/>
            <person name="McClane B.A."/>
            <person name="Titball R.W."/>
            <person name="Rood J.I."/>
            <person name="Melville S.B."/>
            <person name="Paulsen I.T."/>
        </authorList>
    </citation>
    <scope>NUCLEOTIDE SEQUENCE [LARGE SCALE GENOMIC DNA]</scope>
    <source>
        <strain>SM101 / Type A</strain>
    </source>
</reference>
<gene>
    <name evidence="2" type="primary">deoD</name>
    <name type="ordered locus">CPR_1391</name>
</gene>
<protein>
    <recommendedName>
        <fullName evidence="2">Purine nucleoside phosphorylase DeoD-type</fullName>
        <shortName evidence="2">PNP</shortName>
        <ecNumber evidence="2">2.4.2.1</ecNumber>
    </recommendedName>
</protein>
<comment type="function">
    <text evidence="2">Catalyzes the reversible phosphorolytic breakdown of the N-glycosidic bond in the beta-(deoxy)ribonucleoside molecules, with the formation of the corresponding free purine bases and pentose-1-phosphate.</text>
</comment>
<comment type="catalytic activity">
    <reaction evidence="2">
        <text>a purine D-ribonucleoside + phosphate = a purine nucleobase + alpha-D-ribose 1-phosphate</text>
        <dbReference type="Rhea" id="RHEA:19805"/>
        <dbReference type="ChEBI" id="CHEBI:26386"/>
        <dbReference type="ChEBI" id="CHEBI:43474"/>
        <dbReference type="ChEBI" id="CHEBI:57720"/>
        <dbReference type="ChEBI" id="CHEBI:142355"/>
        <dbReference type="EC" id="2.4.2.1"/>
    </reaction>
</comment>
<comment type="catalytic activity">
    <reaction evidence="2">
        <text>a purine 2'-deoxy-D-ribonucleoside + phosphate = a purine nucleobase + 2-deoxy-alpha-D-ribose 1-phosphate</text>
        <dbReference type="Rhea" id="RHEA:36431"/>
        <dbReference type="ChEBI" id="CHEBI:26386"/>
        <dbReference type="ChEBI" id="CHEBI:43474"/>
        <dbReference type="ChEBI" id="CHEBI:57259"/>
        <dbReference type="ChEBI" id="CHEBI:142361"/>
        <dbReference type="EC" id="2.4.2.1"/>
    </reaction>
</comment>
<comment type="subunit">
    <text evidence="2">Homohexamer; trimer of homodimers.</text>
</comment>
<comment type="similarity">
    <text evidence="2">Belongs to the PNP/UDP phosphorylase family.</text>
</comment>
<evidence type="ECO:0000250" key="1">
    <source>
        <dbReference type="UniProtKB" id="P50389"/>
    </source>
</evidence>
<evidence type="ECO:0000255" key="2">
    <source>
        <dbReference type="HAMAP-Rule" id="MF_01627"/>
    </source>
</evidence>
<dbReference type="EC" id="2.4.2.1" evidence="2"/>
<dbReference type="EMBL" id="CP000312">
    <property type="protein sequence ID" value="ABG87249.1"/>
    <property type="molecule type" value="Genomic_DNA"/>
</dbReference>
<dbReference type="RefSeq" id="WP_003463799.1">
    <property type="nucleotide sequence ID" value="NC_008262.1"/>
</dbReference>
<dbReference type="SMR" id="Q0ST47"/>
<dbReference type="KEGG" id="cpr:CPR_1391"/>
<dbReference type="Proteomes" id="UP000001824">
    <property type="component" value="Chromosome"/>
</dbReference>
<dbReference type="GO" id="GO:0005829">
    <property type="term" value="C:cytosol"/>
    <property type="evidence" value="ECO:0007669"/>
    <property type="project" value="TreeGrafter"/>
</dbReference>
<dbReference type="GO" id="GO:0004731">
    <property type="term" value="F:purine-nucleoside phosphorylase activity"/>
    <property type="evidence" value="ECO:0007669"/>
    <property type="project" value="UniProtKB-UniRule"/>
</dbReference>
<dbReference type="GO" id="GO:0006152">
    <property type="term" value="P:purine nucleoside catabolic process"/>
    <property type="evidence" value="ECO:0007669"/>
    <property type="project" value="TreeGrafter"/>
</dbReference>
<dbReference type="CDD" id="cd09006">
    <property type="entry name" value="PNP_EcPNPI-like"/>
    <property type="match status" value="1"/>
</dbReference>
<dbReference type="Gene3D" id="3.40.50.1580">
    <property type="entry name" value="Nucleoside phosphorylase domain"/>
    <property type="match status" value="1"/>
</dbReference>
<dbReference type="HAMAP" id="MF_01627">
    <property type="entry name" value="Pur_nucleosid_phosp"/>
    <property type="match status" value="1"/>
</dbReference>
<dbReference type="InterPro" id="IPR004402">
    <property type="entry name" value="DeoD-type"/>
</dbReference>
<dbReference type="InterPro" id="IPR018016">
    <property type="entry name" value="Nucleoside_phosphorylase_CS"/>
</dbReference>
<dbReference type="InterPro" id="IPR000845">
    <property type="entry name" value="Nucleoside_phosphorylase_d"/>
</dbReference>
<dbReference type="InterPro" id="IPR035994">
    <property type="entry name" value="Nucleoside_phosphorylase_sf"/>
</dbReference>
<dbReference type="NCBIfam" id="TIGR00107">
    <property type="entry name" value="deoD"/>
    <property type="match status" value="1"/>
</dbReference>
<dbReference type="NCBIfam" id="NF004489">
    <property type="entry name" value="PRK05819.1"/>
    <property type="match status" value="1"/>
</dbReference>
<dbReference type="PANTHER" id="PTHR43691:SF11">
    <property type="entry name" value="FI09636P-RELATED"/>
    <property type="match status" value="1"/>
</dbReference>
<dbReference type="PANTHER" id="PTHR43691">
    <property type="entry name" value="URIDINE PHOSPHORYLASE"/>
    <property type="match status" value="1"/>
</dbReference>
<dbReference type="Pfam" id="PF01048">
    <property type="entry name" value="PNP_UDP_1"/>
    <property type="match status" value="1"/>
</dbReference>
<dbReference type="SUPFAM" id="SSF53167">
    <property type="entry name" value="Purine and uridine phosphorylases"/>
    <property type="match status" value="1"/>
</dbReference>
<dbReference type="PROSITE" id="PS01232">
    <property type="entry name" value="PNP_UDP_1"/>
    <property type="match status" value="1"/>
</dbReference>